<keyword id="KW-0021">Allosteric enzyme</keyword>
<keyword id="KW-0963">Cytoplasm</keyword>
<keyword id="KW-0378">Hydrolase</keyword>
<keyword id="KW-0479">Metal-binding</keyword>
<keyword id="KW-0645">Protease</keyword>
<keyword id="KW-1185">Reference proteome</keyword>
<keyword id="KW-0915">Sodium</keyword>
<keyword id="KW-0888">Threonine protease</keyword>
<protein>
    <recommendedName>
        <fullName evidence="1">ATP-dependent protease subunit HslV</fullName>
        <ecNumber evidence="1">3.4.25.2</ecNumber>
    </recommendedName>
</protein>
<name>HSLV_BRASO</name>
<organism>
    <name type="scientific">Bradyrhizobium sp. (strain ORS 278)</name>
    <dbReference type="NCBI Taxonomy" id="114615"/>
    <lineage>
        <taxon>Bacteria</taxon>
        <taxon>Pseudomonadati</taxon>
        <taxon>Pseudomonadota</taxon>
        <taxon>Alphaproteobacteria</taxon>
        <taxon>Hyphomicrobiales</taxon>
        <taxon>Nitrobacteraceae</taxon>
        <taxon>Bradyrhizobium</taxon>
    </lineage>
</organism>
<comment type="function">
    <text evidence="1">Protease subunit of a proteasome-like degradation complex believed to be a general protein degrading machinery.</text>
</comment>
<comment type="catalytic activity">
    <reaction evidence="1">
        <text>ATP-dependent cleavage of peptide bonds with broad specificity.</text>
        <dbReference type="EC" id="3.4.25.2"/>
    </reaction>
</comment>
<comment type="activity regulation">
    <text evidence="1">Allosterically activated by HslU binding.</text>
</comment>
<comment type="subunit">
    <text evidence="1">A double ring-shaped homohexamer of HslV is capped on each side by a ring-shaped HslU homohexamer. The assembly of the HslU/HslV complex is dependent on binding of ATP.</text>
</comment>
<comment type="subcellular location">
    <subcellularLocation>
        <location evidence="1">Cytoplasm</location>
    </subcellularLocation>
</comment>
<comment type="similarity">
    <text evidence="1">Belongs to the peptidase T1B family. HslV subfamily.</text>
</comment>
<feature type="chain" id="PRO_1000012584" description="ATP-dependent protease subunit HslV">
    <location>
        <begin position="1"/>
        <end position="186"/>
    </location>
</feature>
<feature type="active site" evidence="1">
    <location>
        <position position="14"/>
    </location>
</feature>
<feature type="binding site" evidence="1">
    <location>
        <position position="168"/>
    </location>
    <ligand>
        <name>Na(+)</name>
        <dbReference type="ChEBI" id="CHEBI:29101"/>
    </ligand>
</feature>
<feature type="binding site" evidence="1">
    <location>
        <position position="171"/>
    </location>
    <ligand>
        <name>Na(+)</name>
        <dbReference type="ChEBI" id="CHEBI:29101"/>
    </ligand>
</feature>
<feature type="binding site" evidence="1">
    <location>
        <position position="174"/>
    </location>
    <ligand>
        <name>Na(+)</name>
        <dbReference type="ChEBI" id="CHEBI:29101"/>
    </ligand>
</feature>
<accession>A4YJV0</accession>
<sequence length="186" mass="19903">MHALSQEPTVWHGTTILTVRKGGRVVVGGDGQVSIGQTVIKSNARKVRKLGKGDVIGGFAGATADAFTLFERLESKLEQYPGQLTRAAVELAKDWRTDRYLRRLEAMMIVADKEVSLVLTGTGDVLEPEAGVMAIGSGGNYALAAARALIDTDKDAESIVRKSLDIAADICVYTNRNITIEALSAE</sequence>
<reference key="1">
    <citation type="journal article" date="2007" name="Science">
        <title>Legumes symbioses: absence of nod genes in photosynthetic bradyrhizobia.</title>
        <authorList>
            <person name="Giraud E."/>
            <person name="Moulin L."/>
            <person name="Vallenet D."/>
            <person name="Barbe V."/>
            <person name="Cytryn E."/>
            <person name="Avarre J.-C."/>
            <person name="Jaubert M."/>
            <person name="Simon D."/>
            <person name="Cartieaux F."/>
            <person name="Prin Y."/>
            <person name="Bena G."/>
            <person name="Hannibal L."/>
            <person name="Fardoux J."/>
            <person name="Kojadinovic M."/>
            <person name="Vuillet L."/>
            <person name="Lajus A."/>
            <person name="Cruveiller S."/>
            <person name="Rouy Z."/>
            <person name="Mangenot S."/>
            <person name="Segurens B."/>
            <person name="Dossat C."/>
            <person name="Franck W.L."/>
            <person name="Chang W.-S."/>
            <person name="Saunders E."/>
            <person name="Bruce D."/>
            <person name="Richardson P."/>
            <person name="Normand P."/>
            <person name="Dreyfus B."/>
            <person name="Pignol D."/>
            <person name="Stacey G."/>
            <person name="Emerich D."/>
            <person name="Vermeglio A."/>
            <person name="Medigue C."/>
            <person name="Sadowsky M."/>
        </authorList>
    </citation>
    <scope>NUCLEOTIDE SEQUENCE [LARGE SCALE GENOMIC DNA]</scope>
    <source>
        <strain>ORS 278</strain>
    </source>
</reference>
<gene>
    <name evidence="1" type="primary">hslV</name>
    <name type="ordered locus">BRADO0211</name>
</gene>
<dbReference type="EC" id="3.4.25.2" evidence="1"/>
<dbReference type="EMBL" id="CU234118">
    <property type="protein sequence ID" value="CAL74176.1"/>
    <property type="molecule type" value="Genomic_DNA"/>
</dbReference>
<dbReference type="RefSeq" id="WP_011923464.1">
    <property type="nucleotide sequence ID" value="NC_009445.1"/>
</dbReference>
<dbReference type="SMR" id="A4YJV0"/>
<dbReference type="STRING" id="114615.BRADO0211"/>
<dbReference type="MEROPS" id="T01.006"/>
<dbReference type="KEGG" id="bra:BRADO0211"/>
<dbReference type="eggNOG" id="COG5405">
    <property type="taxonomic scope" value="Bacteria"/>
</dbReference>
<dbReference type="HOGENOM" id="CLU_093872_1_0_5"/>
<dbReference type="OrthoDB" id="9804884at2"/>
<dbReference type="Proteomes" id="UP000001994">
    <property type="component" value="Chromosome"/>
</dbReference>
<dbReference type="GO" id="GO:0009376">
    <property type="term" value="C:HslUV protease complex"/>
    <property type="evidence" value="ECO:0007669"/>
    <property type="project" value="UniProtKB-UniRule"/>
</dbReference>
<dbReference type="GO" id="GO:0005839">
    <property type="term" value="C:proteasome core complex"/>
    <property type="evidence" value="ECO:0007669"/>
    <property type="project" value="InterPro"/>
</dbReference>
<dbReference type="GO" id="GO:0046872">
    <property type="term" value="F:metal ion binding"/>
    <property type="evidence" value="ECO:0007669"/>
    <property type="project" value="UniProtKB-KW"/>
</dbReference>
<dbReference type="GO" id="GO:0004298">
    <property type="term" value="F:threonine-type endopeptidase activity"/>
    <property type="evidence" value="ECO:0007669"/>
    <property type="project" value="UniProtKB-KW"/>
</dbReference>
<dbReference type="GO" id="GO:0051603">
    <property type="term" value="P:proteolysis involved in protein catabolic process"/>
    <property type="evidence" value="ECO:0007669"/>
    <property type="project" value="InterPro"/>
</dbReference>
<dbReference type="CDD" id="cd01913">
    <property type="entry name" value="protease_HslV"/>
    <property type="match status" value="1"/>
</dbReference>
<dbReference type="FunFam" id="3.60.20.10:FF:000002">
    <property type="entry name" value="ATP-dependent protease subunit HslV"/>
    <property type="match status" value="1"/>
</dbReference>
<dbReference type="Gene3D" id="3.60.20.10">
    <property type="entry name" value="Glutamine Phosphoribosylpyrophosphate, subunit 1, domain 1"/>
    <property type="match status" value="1"/>
</dbReference>
<dbReference type="HAMAP" id="MF_00248">
    <property type="entry name" value="HslV"/>
    <property type="match status" value="1"/>
</dbReference>
<dbReference type="InterPro" id="IPR022281">
    <property type="entry name" value="ATP-dep_Prtase_HsIV_su"/>
</dbReference>
<dbReference type="InterPro" id="IPR029055">
    <property type="entry name" value="Ntn_hydrolases_N"/>
</dbReference>
<dbReference type="InterPro" id="IPR001353">
    <property type="entry name" value="Proteasome_sua/b"/>
</dbReference>
<dbReference type="InterPro" id="IPR023333">
    <property type="entry name" value="Proteasome_suB-type"/>
</dbReference>
<dbReference type="NCBIfam" id="TIGR03692">
    <property type="entry name" value="ATP_dep_HslV"/>
    <property type="match status" value="1"/>
</dbReference>
<dbReference type="NCBIfam" id="NF003964">
    <property type="entry name" value="PRK05456.1"/>
    <property type="match status" value="1"/>
</dbReference>
<dbReference type="PANTHER" id="PTHR32194:SF7">
    <property type="entry name" value="ATP-DEPENDENT PROTEASE SUBUNIT HSLV"/>
    <property type="match status" value="1"/>
</dbReference>
<dbReference type="PANTHER" id="PTHR32194">
    <property type="entry name" value="METALLOPROTEASE TLDD"/>
    <property type="match status" value="1"/>
</dbReference>
<dbReference type="Pfam" id="PF00227">
    <property type="entry name" value="Proteasome"/>
    <property type="match status" value="1"/>
</dbReference>
<dbReference type="PIRSF" id="PIRSF039093">
    <property type="entry name" value="HslV"/>
    <property type="match status" value="1"/>
</dbReference>
<dbReference type="SUPFAM" id="SSF56235">
    <property type="entry name" value="N-terminal nucleophile aminohydrolases (Ntn hydrolases)"/>
    <property type="match status" value="1"/>
</dbReference>
<dbReference type="PROSITE" id="PS51476">
    <property type="entry name" value="PROTEASOME_BETA_2"/>
    <property type="match status" value="1"/>
</dbReference>
<evidence type="ECO:0000255" key="1">
    <source>
        <dbReference type="HAMAP-Rule" id="MF_00248"/>
    </source>
</evidence>
<proteinExistence type="inferred from homology"/>